<reference key="1">
    <citation type="journal article" date="2007" name="BMC Plant Biol.">
        <title>Complete DNA sequences of the plastid genomes of two parasitic flowering plant species, Cuscuta reflexa and Cuscuta gronovii.</title>
        <authorList>
            <person name="Funk H.T."/>
            <person name="Berg S."/>
            <person name="Krupinska K."/>
            <person name="Maier U.-G."/>
            <person name="Krause K."/>
        </authorList>
    </citation>
    <scope>NUCLEOTIDE SEQUENCE [LARGE SCALE GENOMIC DNA]</scope>
    <scope>RNA EDITING</scope>
</reference>
<accession>A7M993</accession>
<comment type="function">
    <text evidence="1">Component of the cytochrome b6-f complex, which mediates electron transfer between photosystem II (PSII) and photosystem I (PSI), cyclic electron flow around PSI, and state transitions.</text>
</comment>
<comment type="cofactor">
    <cofactor evidence="3">
        <name>heme b</name>
        <dbReference type="ChEBI" id="CHEBI:60344"/>
    </cofactor>
    <text evidence="3">Binds 2 heme b groups non-covalently with two histidine residues as axial ligands.</text>
</comment>
<comment type="cofactor">
    <cofactor evidence="3">
        <name>heme c</name>
        <dbReference type="ChEBI" id="CHEBI:61717"/>
    </cofactor>
    <text evidence="3">Binds one heme group covalently by a single cysteine link with no axial amino acid ligand. This heme was named heme ci.</text>
</comment>
<comment type="subunit">
    <text evidence="1">The 4 large subunits of the cytochrome b6-f complex are cytochrome b6, subunit IV (17 kDa polypeptide, PetD), cytochrome f and the Rieske protein, while the 4 small subunits are PetG, PetL, PetM and PetN. The complex functions as a dimer (By similarity).</text>
</comment>
<comment type="subcellular location">
    <subcellularLocation>
        <location evidence="5">Plastid thylakoid membrane</location>
        <topology evidence="5">Multi-pass membrane protein</topology>
    </subcellularLocation>
</comment>
<comment type="RNA editing">
    <location>
        <position position="140" evidence="4"/>
    </location>
    <location>
        <position position="204" evidence="4"/>
    </location>
</comment>
<comment type="miscellaneous">
    <text evidence="1">Heme 1 (or BH or b566) is high-potential and absorbs at about 566 nm, and heme 2 (or BL or b562) is low-potential and absorbs at about 562 nm.</text>
</comment>
<comment type="similarity">
    <text evidence="5">Belongs to the cytochrome b family. PetB subfamily.</text>
</comment>
<comment type="caution">
    <text evidence="5">Young tissue from this organism is photosynthetic and contains some thylakoids, although the photosynthetic activity does not exceed the light compensation point.</text>
</comment>
<proteinExistence type="evidence at transcript level"/>
<name>CYB6_CUSRE</name>
<geneLocation type="plastid"/>
<protein>
    <recommendedName>
        <fullName>Cytochrome b6</fullName>
    </recommendedName>
</protein>
<dbReference type="EMBL" id="AM711640">
    <property type="protein sequence ID" value="CAM98421.1"/>
    <property type="status" value="ALT_SEQ"/>
    <property type="molecule type" value="Genomic_DNA"/>
</dbReference>
<dbReference type="RefSeq" id="YP_001430134.1">
    <property type="nucleotide sequence ID" value="NC_009766.1"/>
</dbReference>
<dbReference type="SMR" id="A7M993"/>
<dbReference type="GeneID" id="5536694"/>
<dbReference type="GO" id="GO:0055035">
    <property type="term" value="C:plastid thylakoid membrane"/>
    <property type="evidence" value="ECO:0007669"/>
    <property type="project" value="UniProtKB-SubCell"/>
</dbReference>
<dbReference type="GO" id="GO:0045158">
    <property type="term" value="F:electron transporter, transferring electrons within cytochrome b6/f complex of photosystem II activity"/>
    <property type="evidence" value="ECO:0007669"/>
    <property type="project" value="UniProtKB-UniRule"/>
</dbReference>
<dbReference type="GO" id="GO:0046872">
    <property type="term" value="F:metal ion binding"/>
    <property type="evidence" value="ECO:0007669"/>
    <property type="project" value="UniProtKB-KW"/>
</dbReference>
<dbReference type="GO" id="GO:0016491">
    <property type="term" value="F:oxidoreductase activity"/>
    <property type="evidence" value="ECO:0007669"/>
    <property type="project" value="InterPro"/>
</dbReference>
<dbReference type="GO" id="GO:0015979">
    <property type="term" value="P:photosynthesis"/>
    <property type="evidence" value="ECO:0007669"/>
    <property type="project" value="UniProtKB-UniRule"/>
</dbReference>
<dbReference type="GO" id="GO:0022904">
    <property type="term" value="P:respiratory electron transport chain"/>
    <property type="evidence" value="ECO:0007669"/>
    <property type="project" value="InterPro"/>
</dbReference>
<dbReference type="CDD" id="cd00284">
    <property type="entry name" value="Cytochrome_b_N"/>
    <property type="match status" value="1"/>
</dbReference>
<dbReference type="FunFam" id="1.20.810.10:FF:000001">
    <property type="entry name" value="Cytochrome b6"/>
    <property type="match status" value="1"/>
</dbReference>
<dbReference type="Gene3D" id="1.20.810.10">
    <property type="entry name" value="Cytochrome Bc1 Complex, Chain C"/>
    <property type="match status" value="1"/>
</dbReference>
<dbReference type="HAMAP" id="MF_00633">
    <property type="entry name" value="Cytb6_f_cytb6"/>
    <property type="match status" value="1"/>
</dbReference>
<dbReference type="InterPro" id="IPR005797">
    <property type="entry name" value="Cyt_b/b6_N"/>
</dbReference>
<dbReference type="InterPro" id="IPR023530">
    <property type="entry name" value="Cyt_B6_PetB"/>
</dbReference>
<dbReference type="InterPro" id="IPR027387">
    <property type="entry name" value="Cytb/b6-like_sf"/>
</dbReference>
<dbReference type="InterPro" id="IPR048259">
    <property type="entry name" value="Cytochrome_b_N_euk/bac"/>
</dbReference>
<dbReference type="InterPro" id="IPR016174">
    <property type="entry name" value="Di-haem_cyt_TM"/>
</dbReference>
<dbReference type="NCBIfam" id="NF002990">
    <property type="entry name" value="PRK03735.1"/>
    <property type="match status" value="1"/>
</dbReference>
<dbReference type="PANTHER" id="PTHR19271">
    <property type="entry name" value="CYTOCHROME B"/>
    <property type="match status" value="1"/>
</dbReference>
<dbReference type="PANTHER" id="PTHR19271:SF16">
    <property type="entry name" value="CYTOCHROME B"/>
    <property type="match status" value="1"/>
</dbReference>
<dbReference type="Pfam" id="PF00033">
    <property type="entry name" value="Cytochrome_B"/>
    <property type="match status" value="1"/>
</dbReference>
<dbReference type="PIRSF" id="PIRSF000032">
    <property type="entry name" value="Cytochrome_b6"/>
    <property type="match status" value="1"/>
</dbReference>
<dbReference type="SUPFAM" id="SSF81342">
    <property type="entry name" value="Transmembrane di-heme cytochromes"/>
    <property type="match status" value="1"/>
</dbReference>
<dbReference type="PROSITE" id="PS51002">
    <property type="entry name" value="CYTB_NTER"/>
    <property type="match status" value="1"/>
</dbReference>
<sequence length="215" mass="24161">MSKVYDWLEERLEIQAIADDITSKYVPPHVNIFYCLGGITLTCFLVQVATGFAMTFYYRPTVTEAFASVKYIMTEANFGWLIRSVHRWSASMMVLMMILHVFRVYLTGGFKKPRELTWVTGVVLAVLTASFGVTGYSLPWDQIGYWAVKIVTGVPEAIPLIGSPLVELLRGSASVGQSTLTRFYSLHTFVLPLITAVFMLMHFLMIRKQGISGPL</sequence>
<feature type="chain" id="PRO_0000308481" description="Cytochrome b6">
    <location>
        <begin position="1"/>
        <end position="215"/>
    </location>
</feature>
<feature type="transmembrane region" description="Helical" evidence="2">
    <location>
        <begin position="32"/>
        <end position="52"/>
    </location>
</feature>
<feature type="transmembrane region" description="Helical" evidence="2">
    <location>
        <begin position="90"/>
        <end position="110"/>
    </location>
</feature>
<feature type="transmembrane region" description="Helical" evidence="2">
    <location>
        <begin position="116"/>
        <end position="136"/>
    </location>
</feature>
<feature type="transmembrane region" description="Helical" evidence="2">
    <location>
        <begin position="186"/>
        <end position="206"/>
    </location>
</feature>
<feature type="binding site" description="covalent" evidence="3">
    <location>
        <position position="35"/>
    </location>
    <ligand>
        <name>heme c</name>
        <dbReference type="ChEBI" id="CHEBI:61717"/>
    </ligand>
</feature>
<feature type="binding site" description="axial binding residue" evidence="3">
    <location>
        <position position="86"/>
    </location>
    <ligand>
        <name>heme b</name>
        <dbReference type="ChEBI" id="CHEBI:60344"/>
        <label>2</label>
    </ligand>
    <ligandPart>
        <name>Fe</name>
        <dbReference type="ChEBI" id="CHEBI:18248"/>
    </ligandPart>
</feature>
<feature type="binding site" description="axial binding residue" evidence="3">
    <location>
        <position position="100"/>
    </location>
    <ligand>
        <name>heme b</name>
        <dbReference type="ChEBI" id="CHEBI:60344"/>
        <label>1</label>
    </ligand>
    <ligandPart>
        <name>Fe</name>
        <dbReference type="ChEBI" id="CHEBI:18248"/>
    </ligandPart>
</feature>
<feature type="binding site" description="axial binding residue" evidence="3">
    <location>
        <position position="187"/>
    </location>
    <ligand>
        <name>heme b</name>
        <dbReference type="ChEBI" id="CHEBI:60344"/>
        <label>2</label>
    </ligand>
    <ligandPart>
        <name>Fe</name>
        <dbReference type="ChEBI" id="CHEBI:18248"/>
    </ligandPart>
</feature>
<feature type="binding site" description="axial binding residue" evidence="3">
    <location>
        <position position="202"/>
    </location>
    <ligand>
        <name>heme b</name>
        <dbReference type="ChEBI" id="CHEBI:60344"/>
        <label>1</label>
    </ligand>
    <ligandPart>
        <name>Fe</name>
        <dbReference type="ChEBI" id="CHEBI:18248"/>
    </ligandPart>
</feature>
<evidence type="ECO:0000250" key="1"/>
<evidence type="ECO:0000255" key="2"/>
<evidence type="ECO:0000255" key="3">
    <source>
        <dbReference type="HAMAP-Rule" id="MF_00633"/>
    </source>
</evidence>
<evidence type="ECO:0000269" key="4">
    <source>
    </source>
</evidence>
<evidence type="ECO:0000305" key="5"/>
<organism>
    <name type="scientific">Cuscuta reflexa</name>
    <name type="common">Southern Asian dodder</name>
    <dbReference type="NCBI Taxonomy" id="4129"/>
    <lineage>
        <taxon>Eukaryota</taxon>
        <taxon>Viridiplantae</taxon>
        <taxon>Streptophyta</taxon>
        <taxon>Embryophyta</taxon>
        <taxon>Tracheophyta</taxon>
        <taxon>Spermatophyta</taxon>
        <taxon>Magnoliopsida</taxon>
        <taxon>eudicotyledons</taxon>
        <taxon>Gunneridae</taxon>
        <taxon>Pentapetalae</taxon>
        <taxon>asterids</taxon>
        <taxon>lamiids</taxon>
        <taxon>Solanales</taxon>
        <taxon>Convolvulaceae</taxon>
        <taxon>Cuscuteae</taxon>
        <taxon>Cuscuta</taxon>
        <taxon>Cuscuta subgen. Monogynella</taxon>
    </lineage>
</organism>
<gene>
    <name type="primary">petB</name>
</gene>
<keyword id="KW-0249">Electron transport</keyword>
<keyword id="KW-0349">Heme</keyword>
<keyword id="KW-0408">Iron</keyword>
<keyword id="KW-0472">Membrane</keyword>
<keyword id="KW-0479">Metal-binding</keyword>
<keyword id="KW-0602">Photosynthesis</keyword>
<keyword id="KW-0934">Plastid</keyword>
<keyword id="KW-0691">RNA editing</keyword>
<keyword id="KW-0793">Thylakoid</keyword>
<keyword id="KW-0812">Transmembrane</keyword>
<keyword id="KW-1133">Transmembrane helix</keyword>
<keyword id="KW-0813">Transport</keyword>